<keyword id="KW-0067">ATP-binding</keyword>
<keyword id="KW-0119">Carbohydrate metabolism</keyword>
<keyword id="KW-0418">Kinase</keyword>
<keyword id="KW-0460">Magnesium</keyword>
<keyword id="KW-0479">Metal-binding</keyword>
<keyword id="KW-0511">Multifunctional enzyme</keyword>
<keyword id="KW-0547">Nucleotide-binding</keyword>
<keyword id="KW-1185">Reference proteome</keyword>
<keyword id="KW-0723">Serine/threonine-protein kinase</keyword>
<keyword id="KW-0808">Transferase</keyword>
<feature type="chain" id="PRO_1000067150" description="HPr kinase/phosphorylase">
    <location>
        <begin position="1"/>
        <end position="322"/>
    </location>
</feature>
<feature type="region of interest" description="Important for the catalytic mechanism of both phosphorylation and dephosphorylation" evidence="1">
    <location>
        <begin position="205"/>
        <end position="214"/>
    </location>
</feature>
<feature type="region of interest" description="Important for the catalytic mechanism of dephosphorylation" evidence="1">
    <location>
        <begin position="268"/>
        <end position="273"/>
    </location>
</feature>
<feature type="active site" evidence="1">
    <location>
        <position position="142"/>
    </location>
</feature>
<feature type="active site" evidence="1">
    <location>
        <position position="163"/>
    </location>
</feature>
<feature type="active site" description="Proton acceptor; for phosphorylation activity. Proton donor; for dephosphorylation activity" evidence="1">
    <location>
        <position position="181"/>
    </location>
</feature>
<feature type="active site" evidence="1">
    <location>
        <position position="247"/>
    </location>
</feature>
<feature type="binding site" evidence="1">
    <location>
        <begin position="157"/>
        <end position="164"/>
    </location>
    <ligand>
        <name>ATP</name>
        <dbReference type="ChEBI" id="CHEBI:30616"/>
    </ligand>
</feature>
<feature type="binding site" evidence="1">
    <location>
        <position position="164"/>
    </location>
    <ligand>
        <name>Mg(2+)</name>
        <dbReference type="ChEBI" id="CHEBI:18420"/>
    </ligand>
</feature>
<feature type="binding site" evidence="1">
    <location>
        <position position="206"/>
    </location>
    <ligand>
        <name>Mg(2+)</name>
        <dbReference type="ChEBI" id="CHEBI:18420"/>
    </ligand>
</feature>
<dbReference type="EC" id="2.7.11.-" evidence="1"/>
<dbReference type="EC" id="2.7.4.-" evidence="1"/>
<dbReference type="EMBL" id="CP000033">
    <property type="protein sequence ID" value="AAV42552.1"/>
    <property type="molecule type" value="Genomic_DNA"/>
</dbReference>
<dbReference type="RefSeq" id="WP_003546560.1">
    <property type="nucleotide sequence ID" value="NC_006814.3"/>
</dbReference>
<dbReference type="RefSeq" id="YP_193583.1">
    <property type="nucleotide sequence ID" value="NC_006814.3"/>
</dbReference>
<dbReference type="SMR" id="Q5FL72"/>
<dbReference type="STRING" id="272621.LBA0676"/>
<dbReference type="GeneID" id="93290196"/>
<dbReference type="KEGG" id="lac:LBA0676"/>
<dbReference type="PATRIC" id="fig|272621.13.peg.646"/>
<dbReference type="eggNOG" id="COG1493">
    <property type="taxonomic scope" value="Bacteria"/>
</dbReference>
<dbReference type="HOGENOM" id="CLU_052030_0_1_9"/>
<dbReference type="OrthoDB" id="9778803at2"/>
<dbReference type="BioCyc" id="LACI272621:G1G49-698-MONOMER"/>
<dbReference type="Proteomes" id="UP000006381">
    <property type="component" value="Chromosome"/>
</dbReference>
<dbReference type="GO" id="GO:0005524">
    <property type="term" value="F:ATP binding"/>
    <property type="evidence" value="ECO:0007669"/>
    <property type="project" value="UniProtKB-UniRule"/>
</dbReference>
<dbReference type="GO" id="GO:0000287">
    <property type="term" value="F:magnesium ion binding"/>
    <property type="evidence" value="ECO:0007669"/>
    <property type="project" value="UniProtKB-UniRule"/>
</dbReference>
<dbReference type="GO" id="GO:0000155">
    <property type="term" value="F:phosphorelay sensor kinase activity"/>
    <property type="evidence" value="ECO:0007669"/>
    <property type="project" value="InterPro"/>
</dbReference>
<dbReference type="GO" id="GO:0004674">
    <property type="term" value="F:protein serine/threonine kinase activity"/>
    <property type="evidence" value="ECO:0007669"/>
    <property type="project" value="UniProtKB-KW"/>
</dbReference>
<dbReference type="GO" id="GO:0004712">
    <property type="term" value="F:protein serine/threonine/tyrosine kinase activity"/>
    <property type="evidence" value="ECO:0007669"/>
    <property type="project" value="UniProtKB-UniRule"/>
</dbReference>
<dbReference type="GO" id="GO:0006109">
    <property type="term" value="P:regulation of carbohydrate metabolic process"/>
    <property type="evidence" value="ECO:0007669"/>
    <property type="project" value="UniProtKB-UniRule"/>
</dbReference>
<dbReference type="CDD" id="cd01918">
    <property type="entry name" value="HprK_C"/>
    <property type="match status" value="1"/>
</dbReference>
<dbReference type="FunFam" id="3.40.50.300:FF:000174">
    <property type="entry name" value="HPr kinase/phosphorylase"/>
    <property type="match status" value="1"/>
</dbReference>
<dbReference type="Gene3D" id="3.40.1390.20">
    <property type="entry name" value="HprK N-terminal domain-like"/>
    <property type="match status" value="1"/>
</dbReference>
<dbReference type="Gene3D" id="3.40.50.300">
    <property type="entry name" value="P-loop containing nucleotide triphosphate hydrolases"/>
    <property type="match status" value="1"/>
</dbReference>
<dbReference type="HAMAP" id="MF_01249">
    <property type="entry name" value="HPr_kinase"/>
    <property type="match status" value="1"/>
</dbReference>
<dbReference type="InterPro" id="IPR003755">
    <property type="entry name" value="HPr(Ser)_kin/Pase"/>
</dbReference>
<dbReference type="InterPro" id="IPR011104">
    <property type="entry name" value="Hpr_kin/Pase_C"/>
</dbReference>
<dbReference type="InterPro" id="IPR011126">
    <property type="entry name" value="Hpr_kin/Pase_Hpr_N"/>
</dbReference>
<dbReference type="InterPro" id="IPR027417">
    <property type="entry name" value="P-loop_NTPase"/>
</dbReference>
<dbReference type="InterPro" id="IPR028979">
    <property type="entry name" value="Ser_kin/Pase_Hpr-like_N_sf"/>
</dbReference>
<dbReference type="NCBIfam" id="TIGR00679">
    <property type="entry name" value="hpr-ser"/>
    <property type="match status" value="1"/>
</dbReference>
<dbReference type="PANTHER" id="PTHR30305:SF1">
    <property type="entry name" value="HPR KINASE_PHOSPHORYLASE"/>
    <property type="match status" value="1"/>
</dbReference>
<dbReference type="PANTHER" id="PTHR30305">
    <property type="entry name" value="PROTEIN YJDM-RELATED"/>
    <property type="match status" value="1"/>
</dbReference>
<dbReference type="Pfam" id="PF07475">
    <property type="entry name" value="Hpr_kinase_C"/>
    <property type="match status" value="1"/>
</dbReference>
<dbReference type="Pfam" id="PF02603">
    <property type="entry name" value="Hpr_kinase_N"/>
    <property type="match status" value="1"/>
</dbReference>
<dbReference type="SUPFAM" id="SSF75138">
    <property type="entry name" value="HprK N-terminal domain-like"/>
    <property type="match status" value="1"/>
</dbReference>
<dbReference type="SUPFAM" id="SSF53795">
    <property type="entry name" value="PEP carboxykinase-like"/>
    <property type="match status" value="1"/>
</dbReference>
<evidence type="ECO:0000255" key="1">
    <source>
        <dbReference type="HAMAP-Rule" id="MF_01249"/>
    </source>
</evidence>
<sequence length="322" mass="36214">MADEVKLSKLIKDNKSILEVYQGQEYVNAKKIYVSDIYRPGLELTGYFDFYPAQRIQLLGRTEISYAARLDHEIRTHVFTKMATKATPCFLISRSLPVPEELSEAAEKANIPILRTSESTTYISSILTEYLRARLAKRNSIHGVLVEIKGMGVLLTGASGVGKSETALGLVQRGHRLIADDRVDVFQKDHNTVVGEAPKILRHLMEIRGIGIIDVMNLFGAGAVKSRTEIQLVINLVNWDPKANYDRLGFQENTREICNVEIPQVNIPVKVGRNIEIIIEVAAMNFRAKKMGYDATQMFDNNLTNLISEHSKEDTDKVQHDD</sequence>
<reference key="1">
    <citation type="journal article" date="2005" name="Proc. Natl. Acad. Sci. U.S.A.">
        <title>Complete genome sequence of the probiotic lactic acid bacterium Lactobacillus acidophilus NCFM.</title>
        <authorList>
            <person name="Altermann E."/>
            <person name="Russell W.M."/>
            <person name="Azcarate-Peril M.A."/>
            <person name="Barrangou R."/>
            <person name="Buck B.L."/>
            <person name="McAuliffe O."/>
            <person name="Souther N."/>
            <person name="Dobson A."/>
            <person name="Duong T."/>
            <person name="Callanan M."/>
            <person name="Lick S."/>
            <person name="Hamrick A."/>
            <person name="Cano R."/>
            <person name="Klaenhammer T.R."/>
        </authorList>
    </citation>
    <scope>NUCLEOTIDE SEQUENCE [LARGE SCALE GENOMIC DNA]</scope>
    <source>
        <strain>ATCC 700396 / NCK56 / N2 / NCFM</strain>
    </source>
</reference>
<proteinExistence type="inferred from homology"/>
<comment type="function">
    <text evidence="1">Catalyzes the ATP- as well as the pyrophosphate-dependent phosphorylation of a specific serine residue in HPr, a phosphocarrier protein of the phosphoenolpyruvate-dependent sugar phosphotransferase system (PTS). HprK/P also catalyzes the pyrophosphate-producing, inorganic phosphate-dependent dephosphorylation (phosphorolysis) of seryl-phosphorylated HPr (P-Ser-HPr). The two antagonistic activities of HprK/P are regulated by several intracellular metabolites, which change their concentration in response to the absence or presence of rapidly metabolisable carbon sources (glucose, fructose, etc.) in the growth medium. Therefore, by controlling the phosphorylation state of HPr, HPrK/P is a sensor enzyme that plays a major role in the regulation of carbon metabolism and sugar transport: it mediates carbon catabolite repression (CCR), and regulates PTS-catalyzed carbohydrate uptake and inducer exclusion.</text>
</comment>
<comment type="catalytic activity">
    <reaction evidence="1">
        <text>[HPr protein]-L-serine + ATP = [HPr protein]-O-phospho-L-serine + ADP + H(+)</text>
        <dbReference type="Rhea" id="RHEA:46600"/>
        <dbReference type="Rhea" id="RHEA-COMP:11602"/>
        <dbReference type="Rhea" id="RHEA-COMP:11603"/>
        <dbReference type="ChEBI" id="CHEBI:15378"/>
        <dbReference type="ChEBI" id="CHEBI:29999"/>
        <dbReference type="ChEBI" id="CHEBI:30616"/>
        <dbReference type="ChEBI" id="CHEBI:83421"/>
        <dbReference type="ChEBI" id="CHEBI:456216"/>
    </reaction>
</comment>
<comment type="catalytic activity">
    <reaction evidence="1">
        <text>[HPr protein]-O-phospho-L-serine + phosphate + H(+) = [HPr protein]-L-serine + diphosphate</text>
        <dbReference type="Rhea" id="RHEA:46604"/>
        <dbReference type="Rhea" id="RHEA-COMP:11602"/>
        <dbReference type="Rhea" id="RHEA-COMP:11603"/>
        <dbReference type="ChEBI" id="CHEBI:15378"/>
        <dbReference type="ChEBI" id="CHEBI:29999"/>
        <dbReference type="ChEBI" id="CHEBI:33019"/>
        <dbReference type="ChEBI" id="CHEBI:43474"/>
        <dbReference type="ChEBI" id="CHEBI:83421"/>
    </reaction>
</comment>
<comment type="cofactor">
    <cofactor evidence="1">
        <name>Mg(2+)</name>
        <dbReference type="ChEBI" id="CHEBI:18420"/>
    </cofactor>
</comment>
<comment type="subunit">
    <text evidence="1">Homohexamer.</text>
</comment>
<comment type="domain">
    <text evidence="1">The Walker A ATP-binding motif also binds Pi and PPi.</text>
</comment>
<comment type="miscellaneous">
    <text evidence="1">Both phosphorylation and phosphorolysis are carried out by the same active site and suggest a common mechanism for both reactions.</text>
</comment>
<comment type="similarity">
    <text evidence="1">Belongs to the HPrK/P family.</text>
</comment>
<gene>
    <name evidence="1" type="primary">hprK</name>
    <name type="ordered locus">LBA0676</name>
</gene>
<name>HPRK_LACAC</name>
<organism>
    <name type="scientific">Lactobacillus acidophilus (strain ATCC 700396 / NCK56 / N2 / NCFM)</name>
    <dbReference type="NCBI Taxonomy" id="272621"/>
    <lineage>
        <taxon>Bacteria</taxon>
        <taxon>Bacillati</taxon>
        <taxon>Bacillota</taxon>
        <taxon>Bacilli</taxon>
        <taxon>Lactobacillales</taxon>
        <taxon>Lactobacillaceae</taxon>
        <taxon>Lactobacillus</taxon>
    </lineage>
</organism>
<accession>Q5FL72</accession>
<protein>
    <recommendedName>
        <fullName evidence="1">HPr kinase/phosphorylase</fullName>
        <shortName evidence="1">HPrK/P</shortName>
        <ecNumber evidence="1">2.7.11.-</ecNumber>
        <ecNumber evidence="1">2.7.4.-</ecNumber>
    </recommendedName>
    <alternativeName>
        <fullName evidence="1">HPr(Ser) kinase/phosphorylase</fullName>
    </alternativeName>
</protein>